<comment type="function">
    <text evidence="1">Catalyzes the NADPH-dependent reduction of 7-cyano-7-deazaguanine (preQ0) to 7-aminomethyl-7-deazaguanine (preQ1).</text>
</comment>
<comment type="catalytic activity">
    <reaction evidence="1">
        <text>7-aminomethyl-7-carbaguanine + 2 NADP(+) = 7-cyano-7-deazaguanine + 2 NADPH + 3 H(+)</text>
        <dbReference type="Rhea" id="RHEA:13409"/>
        <dbReference type="ChEBI" id="CHEBI:15378"/>
        <dbReference type="ChEBI" id="CHEBI:45075"/>
        <dbReference type="ChEBI" id="CHEBI:57783"/>
        <dbReference type="ChEBI" id="CHEBI:58349"/>
        <dbReference type="ChEBI" id="CHEBI:58703"/>
        <dbReference type="EC" id="1.7.1.13"/>
    </reaction>
</comment>
<comment type="pathway">
    <text evidence="1">tRNA modification; tRNA-queuosine biosynthesis.</text>
</comment>
<comment type="subcellular location">
    <subcellularLocation>
        <location evidence="1">Cytoplasm</location>
    </subcellularLocation>
</comment>
<comment type="similarity">
    <text evidence="1">Belongs to the GTP cyclohydrolase I family. QueF type 1 subfamily.</text>
</comment>
<keyword id="KW-0963">Cytoplasm</keyword>
<keyword id="KW-0521">NADP</keyword>
<keyword id="KW-0560">Oxidoreductase</keyword>
<keyword id="KW-0671">Queuosine biosynthesis</keyword>
<protein>
    <recommendedName>
        <fullName evidence="1">NADPH-dependent 7-cyano-7-deazaguanine reductase</fullName>
        <ecNumber evidence="1">1.7.1.13</ecNumber>
    </recommendedName>
    <alternativeName>
        <fullName evidence="1">7-cyano-7-carbaguanine reductase</fullName>
    </alternativeName>
    <alternativeName>
        <fullName evidence="1">NADPH-dependent nitrile oxidoreductase</fullName>
    </alternativeName>
    <alternativeName>
        <fullName evidence="1">PreQ(0) reductase</fullName>
    </alternativeName>
</protein>
<sequence>MKKELLEVFDNQFPDRDYTIEIVNPEFTSVCPKTGLPDFGTITLRYVPDKVCIELKSLKYYYLEFRNAGIFYENITNTILDHMISALHPRTLTVTTEWKARGGITETVTASYSSADKA</sequence>
<reference key="1">
    <citation type="submission" date="2008-06" db="EMBL/GenBank/DDBJ databases">
        <title>Complete sequence of chromosome of Prosthecochloris aestuarii DSM 271.</title>
        <authorList>
            <consortium name="US DOE Joint Genome Institute"/>
            <person name="Lucas S."/>
            <person name="Copeland A."/>
            <person name="Lapidus A."/>
            <person name="Glavina del Rio T."/>
            <person name="Dalin E."/>
            <person name="Tice H."/>
            <person name="Bruce D."/>
            <person name="Goodwin L."/>
            <person name="Pitluck S."/>
            <person name="Schmutz J."/>
            <person name="Larimer F."/>
            <person name="Land M."/>
            <person name="Hauser L."/>
            <person name="Kyrpides N."/>
            <person name="Anderson I."/>
            <person name="Liu Z."/>
            <person name="Li T."/>
            <person name="Zhao F."/>
            <person name="Overmann J."/>
            <person name="Bryant D.A."/>
            <person name="Richardson P."/>
        </authorList>
    </citation>
    <scope>NUCLEOTIDE SEQUENCE [LARGE SCALE GENOMIC DNA]</scope>
    <source>
        <strain>DSM 271 / SK 413</strain>
    </source>
</reference>
<gene>
    <name evidence="1" type="primary">queF</name>
    <name type="ordered locus">Paes_0514</name>
</gene>
<name>QUEF_PROA2</name>
<organism>
    <name type="scientific">Prosthecochloris aestuarii (strain DSM 271 / SK 413)</name>
    <dbReference type="NCBI Taxonomy" id="290512"/>
    <lineage>
        <taxon>Bacteria</taxon>
        <taxon>Pseudomonadati</taxon>
        <taxon>Chlorobiota</taxon>
        <taxon>Chlorobiia</taxon>
        <taxon>Chlorobiales</taxon>
        <taxon>Chlorobiaceae</taxon>
        <taxon>Prosthecochloris</taxon>
    </lineage>
</organism>
<feature type="chain" id="PRO_1000134309" description="NADPH-dependent 7-cyano-7-deazaguanine reductase">
    <location>
        <begin position="1"/>
        <end position="118"/>
    </location>
</feature>
<feature type="active site" description="Thioimide intermediate" evidence="1">
    <location>
        <position position="31"/>
    </location>
</feature>
<feature type="active site" description="Proton donor" evidence="1">
    <location>
        <position position="38"/>
    </location>
</feature>
<feature type="binding site" evidence="1">
    <location>
        <begin position="53"/>
        <end position="55"/>
    </location>
    <ligand>
        <name>substrate</name>
    </ligand>
</feature>
<feature type="binding site" evidence="1">
    <location>
        <begin position="72"/>
        <end position="73"/>
    </location>
    <ligand>
        <name>substrate</name>
    </ligand>
</feature>
<proteinExistence type="inferred from homology"/>
<evidence type="ECO:0000255" key="1">
    <source>
        <dbReference type="HAMAP-Rule" id="MF_00818"/>
    </source>
</evidence>
<accession>B4S5H3</accession>
<dbReference type="EC" id="1.7.1.13" evidence="1"/>
<dbReference type="EMBL" id="CP001108">
    <property type="protein sequence ID" value="ACF45570.1"/>
    <property type="molecule type" value="Genomic_DNA"/>
</dbReference>
<dbReference type="RefSeq" id="WP_012505107.1">
    <property type="nucleotide sequence ID" value="NC_011059.1"/>
</dbReference>
<dbReference type="SMR" id="B4S5H3"/>
<dbReference type="STRING" id="290512.Paes_0514"/>
<dbReference type="KEGG" id="paa:Paes_0514"/>
<dbReference type="eggNOG" id="COG0780">
    <property type="taxonomic scope" value="Bacteria"/>
</dbReference>
<dbReference type="HOGENOM" id="CLU_102489_1_0_10"/>
<dbReference type="UniPathway" id="UPA00392"/>
<dbReference type="Proteomes" id="UP000002725">
    <property type="component" value="Chromosome"/>
</dbReference>
<dbReference type="GO" id="GO:0005737">
    <property type="term" value="C:cytoplasm"/>
    <property type="evidence" value="ECO:0007669"/>
    <property type="project" value="UniProtKB-SubCell"/>
</dbReference>
<dbReference type="GO" id="GO:0033739">
    <property type="term" value="F:preQ1 synthase activity"/>
    <property type="evidence" value="ECO:0007669"/>
    <property type="project" value="UniProtKB-UniRule"/>
</dbReference>
<dbReference type="GO" id="GO:0008616">
    <property type="term" value="P:queuosine biosynthetic process"/>
    <property type="evidence" value="ECO:0007669"/>
    <property type="project" value="UniProtKB-UniRule"/>
</dbReference>
<dbReference type="GO" id="GO:0006400">
    <property type="term" value="P:tRNA modification"/>
    <property type="evidence" value="ECO:0007669"/>
    <property type="project" value="UniProtKB-UniRule"/>
</dbReference>
<dbReference type="Gene3D" id="3.30.1130.10">
    <property type="match status" value="1"/>
</dbReference>
<dbReference type="HAMAP" id="MF_00818">
    <property type="entry name" value="QueF_type1"/>
    <property type="match status" value="1"/>
</dbReference>
<dbReference type="InterPro" id="IPR043133">
    <property type="entry name" value="GTP-CH-I_C/QueF"/>
</dbReference>
<dbReference type="InterPro" id="IPR050084">
    <property type="entry name" value="NADPH_dep_7-cyano-7-deazaG_red"/>
</dbReference>
<dbReference type="InterPro" id="IPR029500">
    <property type="entry name" value="QueF"/>
</dbReference>
<dbReference type="InterPro" id="IPR016856">
    <property type="entry name" value="QueF_type1"/>
</dbReference>
<dbReference type="NCBIfam" id="TIGR03139">
    <property type="entry name" value="QueF-II"/>
    <property type="match status" value="1"/>
</dbReference>
<dbReference type="PANTHER" id="PTHR34354">
    <property type="entry name" value="NADPH-DEPENDENT 7-CYANO-7-DEAZAGUANINE REDUCTASE"/>
    <property type="match status" value="1"/>
</dbReference>
<dbReference type="PANTHER" id="PTHR34354:SF1">
    <property type="entry name" value="NADPH-DEPENDENT 7-CYANO-7-DEAZAGUANINE REDUCTASE"/>
    <property type="match status" value="1"/>
</dbReference>
<dbReference type="Pfam" id="PF14489">
    <property type="entry name" value="QueF"/>
    <property type="match status" value="1"/>
</dbReference>
<dbReference type="PIRSF" id="PIRSF027377">
    <property type="entry name" value="Nitrile_oxidored_QueF"/>
    <property type="match status" value="1"/>
</dbReference>
<dbReference type="SUPFAM" id="SSF55620">
    <property type="entry name" value="Tetrahydrobiopterin biosynthesis enzymes-like"/>
    <property type="match status" value="1"/>
</dbReference>